<proteinExistence type="inferred from homology"/>
<reference key="1">
    <citation type="journal article" date="2007" name="PLoS ONE">
        <title>A glimpse of streptococcal toxic shock syndrome from comparative genomics of S. suis 2 Chinese isolates.</title>
        <authorList>
            <person name="Chen C."/>
            <person name="Tang J."/>
            <person name="Dong W."/>
            <person name="Wang C."/>
            <person name="Feng Y."/>
            <person name="Wang J."/>
            <person name="Zheng F."/>
            <person name="Pan X."/>
            <person name="Liu D."/>
            <person name="Li M."/>
            <person name="Song Y."/>
            <person name="Zhu X."/>
            <person name="Sun H."/>
            <person name="Feng T."/>
            <person name="Guo Z."/>
            <person name="Ju A."/>
            <person name="Ge J."/>
            <person name="Dong Y."/>
            <person name="Sun W."/>
            <person name="Jiang Y."/>
            <person name="Wang J."/>
            <person name="Yan J."/>
            <person name="Yang H."/>
            <person name="Wang X."/>
            <person name="Gao G.F."/>
            <person name="Yang R."/>
            <person name="Wang J."/>
            <person name="Yu J."/>
        </authorList>
    </citation>
    <scope>NUCLEOTIDE SEQUENCE [LARGE SCALE GENOMIC DNA]</scope>
    <source>
        <strain>05ZYH33</strain>
    </source>
</reference>
<protein>
    <recommendedName>
        <fullName evidence="1">DNA ligase</fullName>
        <ecNumber evidence="1">6.5.1.2</ecNumber>
    </recommendedName>
    <alternativeName>
        <fullName evidence="1">Polydeoxyribonucleotide synthase [NAD(+)]</fullName>
    </alternativeName>
</protein>
<evidence type="ECO:0000255" key="1">
    <source>
        <dbReference type="HAMAP-Rule" id="MF_01588"/>
    </source>
</evidence>
<organism>
    <name type="scientific">Streptococcus suis (strain 05ZYH33)</name>
    <dbReference type="NCBI Taxonomy" id="391295"/>
    <lineage>
        <taxon>Bacteria</taxon>
        <taxon>Bacillati</taxon>
        <taxon>Bacillota</taxon>
        <taxon>Bacilli</taxon>
        <taxon>Lactobacillales</taxon>
        <taxon>Streptococcaceae</taxon>
        <taxon>Streptococcus</taxon>
    </lineage>
</organism>
<sequence length="652" mass="71559">MKTRISELVSVLNQYAKEYYQLDQPSVSDAEYDTLYRELVELETAHPELILPDSPTHRVGGKMLDGFEKYSHVYPLFSLQDAFSREELEAFDQRVRKEFPQATYICELKIDGLSISLTYEAGNLVVGATRGDGSVGENITENLKRVADVPLTLPEAVDITVRGECYMPKASFDRVNKQRQEAGEAEFVNPRNAAAGTLRQLDTGVVAQRGLATFLYQEASPSEATSQSQVLEKLDALGFVTNHEYCLAESIDDTWDFIEKIAERRDDLPYEIDGVVIKVNDLAIQEELGFTVKAPRWAVAYKFPAEEKEAEILSVDWTVGRTGVVTPTANLSPVQLAGTTVSRATLHNVDYIAEKDIRIGDTVIVYKAGDIIPAVLKVVDKYRKEQEIMPIPSHCPSCQSDLQHYEDEVALRCINPICPSQLMSKLEHFASRDAMNIAGLGSSIVEKLFGAGLVHDVADIYKLTVDDLLTLEGFKEKSANKLYQAIQTSKSNSAECLLFGLGIRHVGSKASKILVEKFGDLETLAFADQEAIASLEGLGQVIAKSLTTFFASEGAQQLLAELKEAKVNLTYLGQVVDENAALSGMTVVLTGKLERMKRNEAKAKLEALGANVAGSVSKKTNLVVAGTDAGSTLTKAQELGIEIKDEAWLESL</sequence>
<feature type="chain" id="PRO_0000313468" description="DNA ligase">
    <location>
        <begin position="1"/>
        <end position="652"/>
    </location>
</feature>
<feature type="domain" description="BRCT" evidence="1">
    <location>
        <begin position="577"/>
        <end position="652"/>
    </location>
</feature>
<feature type="active site" description="N6-AMP-lysine intermediate" evidence="1">
    <location>
        <position position="109"/>
    </location>
</feature>
<feature type="binding site" evidence="1">
    <location>
        <begin position="29"/>
        <end position="33"/>
    </location>
    <ligand>
        <name>NAD(+)</name>
        <dbReference type="ChEBI" id="CHEBI:57540"/>
    </ligand>
</feature>
<feature type="binding site" evidence="1">
    <location>
        <begin position="78"/>
        <end position="79"/>
    </location>
    <ligand>
        <name>NAD(+)</name>
        <dbReference type="ChEBI" id="CHEBI:57540"/>
    </ligand>
</feature>
<feature type="binding site" evidence="1">
    <location>
        <position position="107"/>
    </location>
    <ligand>
        <name>NAD(+)</name>
        <dbReference type="ChEBI" id="CHEBI:57540"/>
    </ligand>
</feature>
<feature type="binding site" evidence="1">
    <location>
        <position position="130"/>
    </location>
    <ligand>
        <name>NAD(+)</name>
        <dbReference type="ChEBI" id="CHEBI:57540"/>
    </ligand>
</feature>
<feature type="binding site" evidence="1">
    <location>
        <position position="164"/>
    </location>
    <ligand>
        <name>NAD(+)</name>
        <dbReference type="ChEBI" id="CHEBI:57540"/>
    </ligand>
</feature>
<feature type="binding site" evidence="1">
    <location>
        <position position="278"/>
    </location>
    <ligand>
        <name>NAD(+)</name>
        <dbReference type="ChEBI" id="CHEBI:57540"/>
    </ligand>
</feature>
<feature type="binding site" evidence="1">
    <location>
        <position position="302"/>
    </location>
    <ligand>
        <name>NAD(+)</name>
        <dbReference type="ChEBI" id="CHEBI:57540"/>
    </ligand>
</feature>
<feature type="binding site" evidence="1">
    <location>
        <position position="395"/>
    </location>
    <ligand>
        <name>Zn(2+)</name>
        <dbReference type="ChEBI" id="CHEBI:29105"/>
    </ligand>
</feature>
<feature type="binding site" evidence="1">
    <location>
        <position position="398"/>
    </location>
    <ligand>
        <name>Zn(2+)</name>
        <dbReference type="ChEBI" id="CHEBI:29105"/>
    </ligand>
</feature>
<feature type="binding site" evidence="1">
    <location>
        <position position="413"/>
    </location>
    <ligand>
        <name>Zn(2+)</name>
        <dbReference type="ChEBI" id="CHEBI:29105"/>
    </ligand>
</feature>
<feature type="binding site" evidence="1">
    <location>
        <position position="418"/>
    </location>
    <ligand>
        <name>Zn(2+)</name>
        <dbReference type="ChEBI" id="CHEBI:29105"/>
    </ligand>
</feature>
<accession>A4VVK7</accession>
<name>DNLJ_STRSY</name>
<dbReference type="EC" id="6.5.1.2" evidence="1"/>
<dbReference type="EMBL" id="CP000407">
    <property type="protein sequence ID" value="ABP90146.1"/>
    <property type="molecule type" value="Genomic_DNA"/>
</dbReference>
<dbReference type="SMR" id="A4VVK7"/>
<dbReference type="STRING" id="391295.SSU05_1180"/>
<dbReference type="KEGG" id="ssu:SSU05_1180"/>
<dbReference type="eggNOG" id="COG0272">
    <property type="taxonomic scope" value="Bacteria"/>
</dbReference>
<dbReference type="HOGENOM" id="CLU_007764_2_1_9"/>
<dbReference type="GO" id="GO:0005829">
    <property type="term" value="C:cytosol"/>
    <property type="evidence" value="ECO:0007669"/>
    <property type="project" value="TreeGrafter"/>
</dbReference>
<dbReference type="GO" id="GO:0003677">
    <property type="term" value="F:DNA binding"/>
    <property type="evidence" value="ECO:0007669"/>
    <property type="project" value="InterPro"/>
</dbReference>
<dbReference type="GO" id="GO:0003911">
    <property type="term" value="F:DNA ligase (NAD+) activity"/>
    <property type="evidence" value="ECO:0007669"/>
    <property type="project" value="UniProtKB-UniRule"/>
</dbReference>
<dbReference type="GO" id="GO:0046872">
    <property type="term" value="F:metal ion binding"/>
    <property type="evidence" value="ECO:0007669"/>
    <property type="project" value="UniProtKB-KW"/>
</dbReference>
<dbReference type="GO" id="GO:0006281">
    <property type="term" value="P:DNA repair"/>
    <property type="evidence" value="ECO:0007669"/>
    <property type="project" value="UniProtKB-KW"/>
</dbReference>
<dbReference type="GO" id="GO:0006260">
    <property type="term" value="P:DNA replication"/>
    <property type="evidence" value="ECO:0007669"/>
    <property type="project" value="UniProtKB-KW"/>
</dbReference>
<dbReference type="CDD" id="cd17748">
    <property type="entry name" value="BRCT_DNA_ligase_like"/>
    <property type="match status" value="1"/>
</dbReference>
<dbReference type="CDD" id="cd00114">
    <property type="entry name" value="LIGANc"/>
    <property type="match status" value="1"/>
</dbReference>
<dbReference type="FunFam" id="1.10.150.20:FF:000006">
    <property type="entry name" value="DNA ligase"/>
    <property type="match status" value="1"/>
</dbReference>
<dbReference type="FunFam" id="1.10.150.20:FF:000007">
    <property type="entry name" value="DNA ligase"/>
    <property type="match status" value="1"/>
</dbReference>
<dbReference type="FunFam" id="1.10.287.610:FF:000002">
    <property type="entry name" value="DNA ligase"/>
    <property type="match status" value="1"/>
</dbReference>
<dbReference type="FunFam" id="2.40.50.140:FF:000012">
    <property type="entry name" value="DNA ligase"/>
    <property type="match status" value="1"/>
</dbReference>
<dbReference type="FunFam" id="3.30.470.30:FF:000001">
    <property type="entry name" value="DNA ligase"/>
    <property type="match status" value="1"/>
</dbReference>
<dbReference type="Gene3D" id="6.20.10.30">
    <property type="match status" value="1"/>
</dbReference>
<dbReference type="Gene3D" id="1.10.150.20">
    <property type="entry name" value="5' to 3' exonuclease, C-terminal subdomain"/>
    <property type="match status" value="2"/>
</dbReference>
<dbReference type="Gene3D" id="3.40.50.10190">
    <property type="entry name" value="BRCT domain"/>
    <property type="match status" value="1"/>
</dbReference>
<dbReference type="Gene3D" id="3.30.470.30">
    <property type="entry name" value="DNA ligase/mRNA capping enzyme"/>
    <property type="match status" value="1"/>
</dbReference>
<dbReference type="Gene3D" id="1.10.287.610">
    <property type="entry name" value="Helix hairpin bin"/>
    <property type="match status" value="1"/>
</dbReference>
<dbReference type="Gene3D" id="2.40.50.140">
    <property type="entry name" value="Nucleic acid-binding proteins"/>
    <property type="match status" value="1"/>
</dbReference>
<dbReference type="HAMAP" id="MF_01588">
    <property type="entry name" value="DNA_ligase_A"/>
    <property type="match status" value="1"/>
</dbReference>
<dbReference type="InterPro" id="IPR001357">
    <property type="entry name" value="BRCT_dom"/>
</dbReference>
<dbReference type="InterPro" id="IPR036420">
    <property type="entry name" value="BRCT_dom_sf"/>
</dbReference>
<dbReference type="InterPro" id="IPR041663">
    <property type="entry name" value="DisA/LigA_HHH"/>
</dbReference>
<dbReference type="InterPro" id="IPR001679">
    <property type="entry name" value="DNA_ligase"/>
</dbReference>
<dbReference type="InterPro" id="IPR018239">
    <property type="entry name" value="DNA_ligase_AS"/>
</dbReference>
<dbReference type="InterPro" id="IPR033136">
    <property type="entry name" value="DNA_ligase_CS"/>
</dbReference>
<dbReference type="InterPro" id="IPR013839">
    <property type="entry name" value="DNAligase_adenylation"/>
</dbReference>
<dbReference type="InterPro" id="IPR013840">
    <property type="entry name" value="DNAligase_N"/>
</dbReference>
<dbReference type="InterPro" id="IPR003583">
    <property type="entry name" value="Hlx-hairpin-Hlx_DNA-bd_motif"/>
</dbReference>
<dbReference type="InterPro" id="IPR012340">
    <property type="entry name" value="NA-bd_OB-fold"/>
</dbReference>
<dbReference type="InterPro" id="IPR004150">
    <property type="entry name" value="NAD_DNA_ligase_OB"/>
</dbReference>
<dbReference type="InterPro" id="IPR010994">
    <property type="entry name" value="RuvA_2-like"/>
</dbReference>
<dbReference type="InterPro" id="IPR004149">
    <property type="entry name" value="Znf_DNAligase_C4"/>
</dbReference>
<dbReference type="NCBIfam" id="TIGR00575">
    <property type="entry name" value="dnlj"/>
    <property type="match status" value="1"/>
</dbReference>
<dbReference type="NCBIfam" id="NF005932">
    <property type="entry name" value="PRK07956.1"/>
    <property type="match status" value="1"/>
</dbReference>
<dbReference type="PANTHER" id="PTHR23389">
    <property type="entry name" value="CHROMOSOME TRANSMISSION FIDELITY FACTOR 18"/>
    <property type="match status" value="1"/>
</dbReference>
<dbReference type="PANTHER" id="PTHR23389:SF9">
    <property type="entry name" value="DNA LIGASE"/>
    <property type="match status" value="1"/>
</dbReference>
<dbReference type="Pfam" id="PF00533">
    <property type="entry name" value="BRCT"/>
    <property type="match status" value="1"/>
</dbReference>
<dbReference type="Pfam" id="PF01653">
    <property type="entry name" value="DNA_ligase_aden"/>
    <property type="match status" value="1"/>
</dbReference>
<dbReference type="Pfam" id="PF03120">
    <property type="entry name" value="DNA_ligase_OB"/>
    <property type="match status" value="1"/>
</dbReference>
<dbReference type="Pfam" id="PF03119">
    <property type="entry name" value="DNA_ligase_ZBD"/>
    <property type="match status" value="1"/>
</dbReference>
<dbReference type="Pfam" id="PF12826">
    <property type="entry name" value="HHH_2"/>
    <property type="match status" value="1"/>
</dbReference>
<dbReference type="Pfam" id="PF14520">
    <property type="entry name" value="HHH_5"/>
    <property type="match status" value="1"/>
</dbReference>
<dbReference type="Pfam" id="PF22745">
    <property type="entry name" value="Nlig-Ia"/>
    <property type="match status" value="1"/>
</dbReference>
<dbReference type="PIRSF" id="PIRSF001604">
    <property type="entry name" value="LigA"/>
    <property type="match status" value="1"/>
</dbReference>
<dbReference type="SMART" id="SM00292">
    <property type="entry name" value="BRCT"/>
    <property type="match status" value="1"/>
</dbReference>
<dbReference type="SMART" id="SM00278">
    <property type="entry name" value="HhH1"/>
    <property type="match status" value="3"/>
</dbReference>
<dbReference type="SMART" id="SM00532">
    <property type="entry name" value="LIGANc"/>
    <property type="match status" value="1"/>
</dbReference>
<dbReference type="SUPFAM" id="SSF52113">
    <property type="entry name" value="BRCT domain"/>
    <property type="match status" value="1"/>
</dbReference>
<dbReference type="SUPFAM" id="SSF56091">
    <property type="entry name" value="DNA ligase/mRNA capping enzyme, catalytic domain"/>
    <property type="match status" value="1"/>
</dbReference>
<dbReference type="SUPFAM" id="SSF50249">
    <property type="entry name" value="Nucleic acid-binding proteins"/>
    <property type="match status" value="1"/>
</dbReference>
<dbReference type="SUPFAM" id="SSF47781">
    <property type="entry name" value="RuvA domain 2-like"/>
    <property type="match status" value="1"/>
</dbReference>
<dbReference type="PROSITE" id="PS50172">
    <property type="entry name" value="BRCT"/>
    <property type="match status" value="1"/>
</dbReference>
<dbReference type="PROSITE" id="PS01055">
    <property type="entry name" value="DNA_LIGASE_N1"/>
    <property type="match status" value="1"/>
</dbReference>
<dbReference type="PROSITE" id="PS01056">
    <property type="entry name" value="DNA_LIGASE_N2"/>
    <property type="match status" value="1"/>
</dbReference>
<comment type="function">
    <text evidence="1">DNA ligase that catalyzes the formation of phosphodiester linkages between 5'-phosphoryl and 3'-hydroxyl groups in double-stranded DNA using NAD as a coenzyme and as the energy source for the reaction. It is essential for DNA replication and repair of damaged DNA.</text>
</comment>
<comment type="catalytic activity">
    <reaction evidence="1">
        <text>NAD(+) + (deoxyribonucleotide)n-3'-hydroxyl + 5'-phospho-(deoxyribonucleotide)m = (deoxyribonucleotide)n+m + AMP + beta-nicotinamide D-nucleotide.</text>
        <dbReference type="EC" id="6.5.1.2"/>
    </reaction>
</comment>
<comment type="cofactor">
    <cofactor evidence="1">
        <name>Mg(2+)</name>
        <dbReference type="ChEBI" id="CHEBI:18420"/>
    </cofactor>
    <cofactor evidence="1">
        <name>Mn(2+)</name>
        <dbReference type="ChEBI" id="CHEBI:29035"/>
    </cofactor>
</comment>
<comment type="similarity">
    <text evidence="1">Belongs to the NAD-dependent DNA ligase family. LigA subfamily.</text>
</comment>
<keyword id="KW-0227">DNA damage</keyword>
<keyword id="KW-0234">DNA repair</keyword>
<keyword id="KW-0235">DNA replication</keyword>
<keyword id="KW-0436">Ligase</keyword>
<keyword id="KW-0460">Magnesium</keyword>
<keyword id="KW-0464">Manganese</keyword>
<keyword id="KW-0479">Metal-binding</keyword>
<keyword id="KW-0520">NAD</keyword>
<keyword id="KW-0862">Zinc</keyword>
<gene>
    <name evidence="1" type="primary">ligA</name>
    <name type="ordered locus">SSU05_1180</name>
</gene>